<organism>
    <name type="scientific">Aliarcobacter butzleri (strain RM4018)</name>
    <name type="common">Arcobacter butzleri</name>
    <dbReference type="NCBI Taxonomy" id="367737"/>
    <lineage>
        <taxon>Bacteria</taxon>
        <taxon>Pseudomonadati</taxon>
        <taxon>Campylobacterota</taxon>
        <taxon>Epsilonproteobacteria</taxon>
        <taxon>Campylobacterales</taxon>
        <taxon>Arcobacteraceae</taxon>
        <taxon>Aliarcobacter</taxon>
    </lineage>
</organism>
<keyword id="KW-0067">ATP-binding</keyword>
<keyword id="KW-0315">Glutamine amidotransferase</keyword>
<keyword id="KW-0332">GMP biosynthesis</keyword>
<keyword id="KW-0436">Ligase</keyword>
<keyword id="KW-0547">Nucleotide-binding</keyword>
<keyword id="KW-0658">Purine biosynthesis</keyword>
<keyword id="KW-1185">Reference proteome</keyword>
<comment type="function">
    <text evidence="1">Catalyzes the synthesis of GMP from XMP.</text>
</comment>
<comment type="catalytic activity">
    <reaction evidence="1">
        <text>XMP + L-glutamine + ATP + H2O = GMP + L-glutamate + AMP + diphosphate + 2 H(+)</text>
        <dbReference type="Rhea" id="RHEA:11680"/>
        <dbReference type="ChEBI" id="CHEBI:15377"/>
        <dbReference type="ChEBI" id="CHEBI:15378"/>
        <dbReference type="ChEBI" id="CHEBI:29985"/>
        <dbReference type="ChEBI" id="CHEBI:30616"/>
        <dbReference type="ChEBI" id="CHEBI:33019"/>
        <dbReference type="ChEBI" id="CHEBI:57464"/>
        <dbReference type="ChEBI" id="CHEBI:58115"/>
        <dbReference type="ChEBI" id="CHEBI:58359"/>
        <dbReference type="ChEBI" id="CHEBI:456215"/>
        <dbReference type="EC" id="6.3.5.2"/>
    </reaction>
</comment>
<comment type="pathway">
    <text evidence="1">Purine metabolism; GMP biosynthesis; GMP from XMP (L-Gln route): step 1/1.</text>
</comment>
<comment type="subunit">
    <text evidence="1">Homodimer.</text>
</comment>
<gene>
    <name evidence="1" type="primary">guaA</name>
    <name type="ordered locus">Abu_0921</name>
</gene>
<name>GUAA_ALIB4</name>
<sequence>MKHVPIVVLDFGSQYTQIIARKLREAGVYSEIVPYNEPIGDIVARTPKGIILSGGPASVYAVDAYHPDTTIFELGLPILGICYGMQLISQHFGGSVIPASHHEYGKAKLQFEVENPIFKDTQDGQIVWMSHGDRVENIPAGFEKIATSENSPFAAIADINRNIYAFQFHPEVYHSQEGSKLLKNFAKHICGCESTWNMGSFAKEQIKQIQDKVGNKKVLCAVSGGVDSSVVATLLAEAIGEQVIPVFVDNGLLRANEREQVETMFKSRGVNLITVDASETFLSKLAGVTDPEKKRKIIGETFIEVFDVEAKKHSGIEFLAQGTLYTDVIESVSVKGPSKTIKSHHNVGGLPDWMKFELIEPLREIFKDEVRALGLELGLPKSMISRHPFPGPGLAIRIMGEVNKPDLELLRKADVIMLDVLHSTGYYDKTWQAFTVLLNVKSVGVMGDNRTYDNTVCVRIVDATDGMTATFAHIPHEILETISRRIINEVDGINRVVYDISSKPPATIEWE</sequence>
<proteinExistence type="inferred from homology"/>
<reference key="1">
    <citation type="journal article" date="2007" name="PLoS ONE">
        <title>The complete genome sequence and analysis of the Epsilonproteobacterium Arcobacter butzleri.</title>
        <authorList>
            <person name="Miller W.G."/>
            <person name="Parker C.T."/>
            <person name="Rubenfield M."/>
            <person name="Mendz G.L."/>
            <person name="Woesten M.M.S.M."/>
            <person name="Ussery D.W."/>
            <person name="Stolz J.F."/>
            <person name="Binnewies T.T."/>
            <person name="Hallin P.F."/>
            <person name="Wang G."/>
            <person name="Malek J.A."/>
            <person name="Rogosin A."/>
            <person name="Stanker L.H."/>
            <person name="Mandrell R.E."/>
        </authorList>
    </citation>
    <scope>NUCLEOTIDE SEQUENCE [LARGE SCALE GENOMIC DNA]</scope>
    <source>
        <strain>RM4018</strain>
    </source>
</reference>
<accession>A8ETA7</accession>
<dbReference type="EC" id="6.3.5.2" evidence="1"/>
<dbReference type="EMBL" id="CP000361">
    <property type="protein sequence ID" value="ABV67181.1"/>
    <property type="molecule type" value="Genomic_DNA"/>
</dbReference>
<dbReference type="RefSeq" id="WP_012012645.1">
    <property type="nucleotide sequence ID" value="NC_009850.1"/>
</dbReference>
<dbReference type="SMR" id="A8ETA7"/>
<dbReference type="STRING" id="367737.Abu_0921"/>
<dbReference type="MEROPS" id="C26.957"/>
<dbReference type="GeneID" id="24305579"/>
<dbReference type="KEGG" id="abu:Abu_0921"/>
<dbReference type="eggNOG" id="COG0518">
    <property type="taxonomic scope" value="Bacteria"/>
</dbReference>
<dbReference type="eggNOG" id="COG0519">
    <property type="taxonomic scope" value="Bacteria"/>
</dbReference>
<dbReference type="HOGENOM" id="CLU_014340_0_5_7"/>
<dbReference type="UniPathway" id="UPA00189">
    <property type="reaction ID" value="UER00296"/>
</dbReference>
<dbReference type="Proteomes" id="UP000001136">
    <property type="component" value="Chromosome"/>
</dbReference>
<dbReference type="GO" id="GO:0005829">
    <property type="term" value="C:cytosol"/>
    <property type="evidence" value="ECO:0007669"/>
    <property type="project" value="TreeGrafter"/>
</dbReference>
<dbReference type="GO" id="GO:0005524">
    <property type="term" value="F:ATP binding"/>
    <property type="evidence" value="ECO:0007669"/>
    <property type="project" value="UniProtKB-UniRule"/>
</dbReference>
<dbReference type="GO" id="GO:0003921">
    <property type="term" value="F:GMP synthase activity"/>
    <property type="evidence" value="ECO:0007669"/>
    <property type="project" value="InterPro"/>
</dbReference>
<dbReference type="CDD" id="cd01742">
    <property type="entry name" value="GATase1_GMP_Synthase"/>
    <property type="match status" value="1"/>
</dbReference>
<dbReference type="CDD" id="cd01997">
    <property type="entry name" value="GMP_synthase_C"/>
    <property type="match status" value="1"/>
</dbReference>
<dbReference type="FunFam" id="3.30.300.10:FF:000002">
    <property type="entry name" value="GMP synthase [glutamine-hydrolyzing]"/>
    <property type="match status" value="1"/>
</dbReference>
<dbReference type="FunFam" id="3.40.50.620:FF:000001">
    <property type="entry name" value="GMP synthase [glutamine-hydrolyzing]"/>
    <property type="match status" value="1"/>
</dbReference>
<dbReference type="FunFam" id="3.40.50.880:FF:000001">
    <property type="entry name" value="GMP synthase [glutamine-hydrolyzing]"/>
    <property type="match status" value="1"/>
</dbReference>
<dbReference type="Gene3D" id="3.30.300.10">
    <property type="match status" value="1"/>
</dbReference>
<dbReference type="Gene3D" id="3.40.50.880">
    <property type="match status" value="1"/>
</dbReference>
<dbReference type="Gene3D" id="3.40.50.620">
    <property type="entry name" value="HUPs"/>
    <property type="match status" value="1"/>
</dbReference>
<dbReference type="HAMAP" id="MF_00344">
    <property type="entry name" value="GMP_synthase"/>
    <property type="match status" value="1"/>
</dbReference>
<dbReference type="InterPro" id="IPR029062">
    <property type="entry name" value="Class_I_gatase-like"/>
</dbReference>
<dbReference type="InterPro" id="IPR017926">
    <property type="entry name" value="GATASE"/>
</dbReference>
<dbReference type="InterPro" id="IPR001674">
    <property type="entry name" value="GMP_synth_C"/>
</dbReference>
<dbReference type="InterPro" id="IPR004739">
    <property type="entry name" value="GMP_synth_GATase"/>
</dbReference>
<dbReference type="InterPro" id="IPR022955">
    <property type="entry name" value="GMP_synthase"/>
</dbReference>
<dbReference type="InterPro" id="IPR025777">
    <property type="entry name" value="GMPS_ATP_PPase_dom"/>
</dbReference>
<dbReference type="InterPro" id="IPR022310">
    <property type="entry name" value="NAD/GMP_synthase"/>
</dbReference>
<dbReference type="InterPro" id="IPR014729">
    <property type="entry name" value="Rossmann-like_a/b/a_fold"/>
</dbReference>
<dbReference type="NCBIfam" id="TIGR00884">
    <property type="entry name" value="guaA_Cterm"/>
    <property type="match status" value="1"/>
</dbReference>
<dbReference type="NCBIfam" id="TIGR00888">
    <property type="entry name" value="guaA_Nterm"/>
    <property type="match status" value="1"/>
</dbReference>
<dbReference type="NCBIfam" id="NF000848">
    <property type="entry name" value="PRK00074.1"/>
    <property type="match status" value="1"/>
</dbReference>
<dbReference type="PANTHER" id="PTHR11922:SF2">
    <property type="entry name" value="GMP SYNTHASE [GLUTAMINE-HYDROLYZING]"/>
    <property type="match status" value="1"/>
</dbReference>
<dbReference type="PANTHER" id="PTHR11922">
    <property type="entry name" value="GMP SYNTHASE-RELATED"/>
    <property type="match status" value="1"/>
</dbReference>
<dbReference type="Pfam" id="PF00117">
    <property type="entry name" value="GATase"/>
    <property type="match status" value="1"/>
</dbReference>
<dbReference type="Pfam" id="PF00958">
    <property type="entry name" value="GMP_synt_C"/>
    <property type="match status" value="1"/>
</dbReference>
<dbReference type="Pfam" id="PF02540">
    <property type="entry name" value="NAD_synthase"/>
    <property type="match status" value="1"/>
</dbReference>
<dbReference type="PRINTS" id="PR00097">
    <property type="entry name" value="ANTSNTHASEII"/>
</dbReference>
<dbReference type="PRINTS" id="PR00099">
    <property type="entry name" value="CPSGATASE"/>
</dbReference>
<dbReference type="PRINTS" id="PR00096">
    <property type="entry name" value="GATASE"/>
</dbReference>
<dbReference type="SUPFAM" id="SSF52402">
    <property type="entry name" value="Adenine nucleotide alpha hydrolases-like"/>
    <property type="match status" value="1"/>
</dbReference>
<dbReference type="SUPFAM" id="SSF52317">
    <property type="entry name" value="Class I glutamine amidotransferase-like"/>
    <property type="match status" value="1"/>
</dbReference>
<dbReference type="SUPFAM" id="SSF54810">
    <property type="entry name" value="GMP synthetase C-terminal dimerisation domain"/>
    <property type="match status" value="1"/>
</dbReference>
<dbReference type="PROSITE" id="PS51273">
    <property type="entry name" value="GATASE_TYPE_1"/>
    <property type="match status" value="1"/>
</dbReference>
<dbReference type="PROSITE" id="PS51553">
    <property type="entry name" value="GMPS_ATP_PPASE"/>
    <property type="match status" value="1"/>
</dbReference>
<evidence type="ECO:0000255" key="1">
    <source>
        <dbReference type="HAMAP-Rule" id="MF_00344"/>
    </source>
</evidence>
<protein>
    <recommendedName>
        <fullName evidence="1">GMP synthase [glutamine-hydrolyzing]</fullName>
        <ecNumber evidence="1">6.3.5.2</ecNumber>
    </recommendedName>
    <alternativeName>
        <fullName evidence="1">GMP synthetase</fullName>
    </alternativeName>
    <alternativeName>
        <fullName evidence="1">Glutamine amidotransferase</fullName>
    </alternativeName>
</protein>
<feature type="chain" id="PRO_1000120209" description="GMP synthase [glutamine-hydrolyzing]">
    <location>
        <begin position="1"/>
        <end position="511"/>
    </location>
</feature>
<feature type="domain" description="Glutamine amidotransferase type-1" evidence="1">
    <location>
        <begin position="5"/>
        <end position="195"/>
    </location>
</feature>
<feature type="domain" description="GMPS ATP-PPase" evidence="1">
    <location>
        <begin position="196"/>
        <end position="386"/>
    </location>
</feature>
<feature type="active site" description="Nucleophile" evidence="1">
    <location>
        <position position="82"/>
    </location>
</feature>
<feature type="active site" evidence="1">
    <location>
        <position position="169"/>
    </location>
</feature>
<feature type="active site" evidence="1">
    <location>
        <position position="171"/>
    </location>
</feature>
<feature type="binding site" evidence="1">
    <location>
        <begin position="223"/>
        <end position="229"/>
    </location>
    <ligand>
        <name>ATP</name>
        <dbReference type="ChEBI" id="CHEBI:30616"/>
    </ligand>
</feature>